<sequence>MAKLTKRMRVIREKVDATKQYDINEAIALLKELATAKFVESVDVAVNLGIDARKSDQNVRGATVLPHGTGRSVRVAVFTQGANAEAAKAAGAELVGMEDLADQIKKGEMNFDVVIASPDAMRVVGQLGQVLGPRGLMPNPKVGTVTPNVAEAVKNAKAGQVRYRNDKNGIIHTTIGKVDFDADKLKENLEALLVALKKAKPTQAKGVYIKKVSISTTMGAGVAVDQAGLSASVN</sequence>
<name>RL1_ECO57</name>
<keyword id="KW-1185">Reference proteome</keyword>
<keyword id="KW-0678">Repressor</keyword>
<keyword id="KW-0687">Ribonucleoprotein</keyword>
<keyword id="KW-0689">Ribosomal protein</keyword>
<keyword id="KW-0694">RNA-binding</keyword>
<keyword id="KW-0699">rRNA-binding</keyword>
<keyword id="KW-0810">Translation regulation</keyword>
<keyword id="KW-0820">tRNA-binding</keyword>
<reference key="1">
    <citation type="journal article" date="2001" name="Nature">
        <title>Genome sequence of enterohaemorrhagic Escherichia coli O157:H7.</title>
        <authorList>
            <person name="Perna N.T."/>
            <person name="Plunkett G. III"/>
            <person name="Burland V."/>
            <person name="Mau B."/>
            <person name="Glasner J.D."/>
            <person name="Rose D.J."/>
            <person name="Mayhew G.F."/>
            <person name="Evans P.S."/>
            <person name="Gregor J."/>
            <person name="Kirkpatrick H.A."/>
            <person name="Posfai G."/>
            <person name="Hackett J."/>
            <person name="Klink S."/>
            <person name="Boutin A."/>
            <person name="Shao Y."/>
            <person name="Miller L."/>
            <person name="Grotbeck E.J."/>
            <person name="Davis N.W."/>
            <person name="Lim A."/>
            <person name="Dimalanta E.T."/>
            <person name="Potamousis K."/>
            <person name="Apodaca J."/>
            <person name="Anantharaman T.S."/>
            <person name="Lin J."/>
            <person name="Yen G."/>
            <person name="Schwartz D.C."/>
            <person name="Welch R.A."/>
            <person name="Blattner F.R."/>
        </authorList>
    </citation>
    <scope>NUCLEOTIDE SEQUENCE [LARGE SCALE GENOMIC DNA]</scope>
    <source>
        <strain>O157:H7 / EDL933 / ATCC 700927 / EHEC</strain>
    </source>
</reference>
<reference key="2">
    <citation type="journal article" date="2001" name="DNA Res.">
        <title>Complete genome sequence of enterohemorrhagic Escherichia coli O157:H7 and genomic comparison with a laboratory strain K-12.</title>
        <authorList>
            <person name="Hayashi T."/>
            <person name="Makino K."/>
            <person name="Ohnishi M."/>
            <person name="Kurokawa K."/>
            <person name="Ishii K."/>
            <person name="Yokoyama K."/>
            <person name="Han C.-G."/>
            <person name="Ohtsubo E."/>
            <person name="Nakayama K."/>
            <person name="Murata T."/>
            <person name="Tanaka M."/>
            <person name="Tobe T."/>
            <person name="Iida T."/>
            <person name="Takami H."/>
            <person name="Honda T."/>
            <person name="Sasakawa C."/>
            <person name="Ogasawara N."/>
            <person name="Yasunaga T."/>
            <person name="Kuhara S."/>
            <person name="Shiba T."/>
            <person name="Hattori M."/>
            <person name="Shinagawa H."/>
        </authorList>
    </citation>
    <scope>NUCLEOTIDE SEQUENCE [LARGE SCALE GENOMIC DNA]</scope>
    <source>
        <strain>O157:H7 / Sakai / RIMD 0509952 / EHEC</strain>
    </source>
</reference>
<feature type="initiator methionine" description="Removed" evidence="1">
    <location>
        <position position="1"/>
    </location>
</feature>
<feature type="chain" id="PRO_0000125655" description="Large ribosomal subunit protein uL1">
    <location>
        <begin position="2"/>
        <end position="234"/>
    </location>
</feature>
<comment type="function">
    <text evidence="2">Binds directly to 23S rRNA. The L1 stalk is quite mobile in the ribosome, and is involved in E site tRNA release.</text>
</comment>
<comment type="function">
    <text evidence="2">Protein L1 is also a translational repressor protein, it controls the translation of the L11 operon by binding to its mRNA.</text>
</comment>
<comment type="subunit">
    <text evidence="2">Part of the 50S ribosomal subunit.</text>
</comment>
<comment type="similarity">
    <text evidence="2">Belongs to the universal ribosomal protein uL1 family.</text>
</comment>
<evidence type="ECO:0000250" key="1"/>
<evidence type="ECO:0000255" key="2">
    <source>
        <dbReference type="HAMAP-Rule" id="MF_01318"/>
    </source>
</evidence>
<evidence type="ECO:0000305" key="3"/>
<protein>
    <recommendedName>
        <fullName evidence="2">Large ribosomal subunit protein uL1</fullName>
    </recommendedName>
    <alternativeName>
        <fullName evidence="3">50S ribosomal protein L1</fullName>
    </alternativeName>
</protein>
<accession>P0A7L2</accession>
<accession>P02384</accession>
<dbReference type="EMBL" id="AE005174">
    <property type="protein sequence ID" value="AAG59180.1"/>
    <property type="molecule type" value="Genomic_DNA"/>
</dbReference>
<dbReference type="EMBL" id="BA000007">
    <property type="protein sequence ID" value="BAB38330.1"/>
    <property type="molecule type" value="Genomic_DNA"/>
</dbReference>
<dbReference type="PIR" id="C91242">
    <property type="entry name" value="C91242"/>
</dbReference>
<dbReference type="PIR" id="H86089">
    <property type="entry name" value="H86089"/>
</dbReference>
<dbReference type="RefSeq" id="NP_312934.1">
    <property type="nucleotide sequence ID" value="NC_002695.1"/>
</dbReference>
<dbReference type="RefSeq" id="WP_001096684.1">
    <property type="nucleotide sequence ID" value="NZ_VOAI01000037.1"/>
</dbReference>
<dbReference type="SMR" id="P0A7L2"/>
<dbReference type="IntAct" id="P0A7L2">
    <property type="interactions" value="1"/>
</dbReference>
<dbReference type="STRING" id="155864.Z5557"/>
<dbReference type="GeneID" id="914949"/>
<dbReference type="GeneID" id="93777910"/>
<dbReference type="KEGG" id="ece:Z5557"/>
<dbReference type="KEGG" id="ecs:ECs_4907"/>
<dbReference type="PATRIC" id="fig|386585.9.peg.5131"/>
<dbReference type="eggNOG" id="COG0081">
    <property type="taxonomic scope" value="Bacteria"/>
</dbReference>
<dbReference type="HOGENOM" id="CLU_062853_0_0_6"/>
<dbReference type="OMA" id="EFRVDKH"/>
<dbReference type="Proteomes" id="UP000000558">
    <property type="component" value="Chromosome"/>
</dbReference>
<dbReference type="Proteomes" id="UP000002519">
    <property type="component" value="Chromosome"/>
</dbReference>
<dbReference type="GO" id="GO:0022625">
    <property type="term" value="C:cytosolic large ribosomal subunit"/>
    <property type="evidence" value="ECO:0007669"/>
    <property type="project" value="TreeGrafter"/>
</dbReference>
<dbReference type="GO" id="GO:0019843">
    <property type="term" value="F:rRNA binding"/>
    <property type="evidence" value="ECO:0007669"/>
    <property type="project" value="UniProtKB-UniRule"/>
</dbReference>
<dbReference type="GO" id="GO:0003735">
    <property type="term" value="F:structural constituent of ribosome"/>
    <property type="evidence" value="ECO:0007669"/>
    <property type="project" value="InterPro"/>
</dbReference>
<dbReference type="GO" id="GO:0000049">
    <property type="term" value="F:tRNA binding"/>
    <property type="evidence" value="ECO:0007669"/>
    <property type="project" value="UniProtKB-KW"/>
</dbReference>
<dbReference type="GO" id="GO:0006417">
    <property type="term" value="P:regulation of translation"/>
    <property type="evidence" value="ECO:0007669"/>
    <property type="project" value="UniProtKB-KW"/>
</dbReference>
<dbReference type="GO" id="GO:0006412">
    <property type="term" value="P:translation"/>
    <property type="evidence" value="ECO:0007669"/>
    <property type="project" value="UniProtKB-UniRule"/>
</dbReference>
<dbReference type="CDD" id="cd00403">
    <property type="entry name" value="Ribosomal_L1"/>
    <property type="match status" value="1"/>
</dbReference>
<dbReference type="FunFam" id="3.40.50.790:FF:000001">
    <property type="entry name" value="50S ribosomal protein L1"/>
    <property type="match status" value="1"/>
</dbReference>
<dbReference type="Gene3D" id="3.30.190.20">
    <property type="match status" value="1"/>
</dbReference>
<dbReference type="Gene3D" id="3.40.50.790">
    <property type="match status" value="1"/>
</dbReference>
<dbReference type="HAMAP" id="MF_01318_B">
    <property type="entry name" value="Ribosomal_uL1_B"/>
    <property type="match status" value="1"/>
</dbReference>
<dbReference type="InterPro" id="IPR005878">
    <property type="entry name" value="Ribosom_uL1_bac-type"/>
</dbReference>
<dbReference type="InterPro" id="IPR002143">
    <property type="entry name" value="Ribosomal_uL1"/>
</dbReference>
<dbReference type="InterPro" id="IPR023674">
    <property type="entry name" value="Ribosomal_uL1-like"/>
</dbReference>
<dbReference type="InterPro" id="IPR028364">
    <property type="entry name" value="Ribosomal_uL1/biogenesis"/>
</dbReference>
<dbReference type="InterPro" id="IPR016095">
    <property type="entry name" value="Ribosomal_uL1_3-a/b-sand"/>
</dbReference>
<dbReference type="InterPro" id="IPR023673">
    <property type="entry name" value="Ribosomal_uL1_CS"/>
</dbReference>
<dbReference type="NCBIfam" id="TIGR01169">
    <property type="entry name" value="rplA_bact"/>
    <property type="match status" value="1"/>
</dbReference>
<dbReference type="PANTHER" id="PTHR36427">
    <property type="entry name" value="54S RIBOSOMAL PROTEIN L1, MITOCHONDRIAL"/>
    <property type="match status" value="1"/>
</dbReference>
<dbReference type="PANTHER" id="PTHR36427:SF3">
    <property type="entry name" value="LARGE RIBOSOMAL SUBUNIT PROTEIN UL1M"/>
    <property type="match status" value="1"/>
</dbReference>
<dbReference type="Pfam" id="PF00687">
    <property type="entry name" value="Ribosomal_L1"/>
    <property type="match status" value="1"/>
</dbReference>
<dbReference type="PIRSF" id="PIRSF002155">
    <property type="entry name" value="Ribosomal_L1"/>
    <property type="match status" value="1"/>
</dbReference>
<dbReference type="SUPFAM" id="SSF56808">
    <property type="entry name" value="Ribosomal protein L1"/>
    <property type="match status" value="1"/>
</dbReference>
<dbReference type="PROSITE" id="PS01199">
    <property type="entry name" value="RIBOSOMAL_L1"/>
    <property type="match status" value="1"/>
</dbReference>
<gene>
    <name evidence="2" type="primary">rplA</name>
    <name type="ordered locus">Z5557</name>
    <name type="ordered locus">ECs4907</name>
</gene>
<proteinExistence type="inferred from homology"/>
<organism>
    <name type="scientific">Escherichia coli O157:H7</name>
    <dbReference type="NCBI Taxonomy" id="83334"/>
    <lineage>
        <taxon>Bacteria</taxon>
        <taxon>Pseudomonadati</taxon>
        <taxon>Pseudomonadota</taxon>
        <taxon>Gammaproteobacteria</taxon>
        <taxon>Enterobacterales</taxon>
        <taxon>Enterobacteriaceae</taxon>
        <taxon>Escherichia</taxon>
    </lineage>
</organism>